<gene>
    <name type="primary">NDUFA11</name>
</gene>
<protein>
    <recommendedName>
        <fullName>NADH dehydrogenase [ubiquinone] 1 alpha subcomplex subunit 11</fullName>
    </recommendedName>
    <alternativeName>
        <fullName>Complex I-B14.7</fullName>
        <shortName>CI-B14.7</shortName>
    </alternativeName>
    <alternativeName>
        <fullName>NADH-ubiquinone oxidoreductase subunit B14.7</fullName>
    </alternativeName>
</protein>
<reference key="1">
    <citation type="journal article" date="2006" name="Gene">
        <title>Adaptive selection of mitochondrial complex I subunits during primate radiation.</title>
        <authorList>
            <person name="Mishmar D."/>
            <person name="Ruiz-Pesini E."/>
            <person name="Mondragon-Palomino M."/>
            <person name="Procaccio V."/>
            <person name="Gaut B."/>
            <person name="Wallace D.C."/>
        </authorList>
    </citation>
    <scope>NUCLEOTIDE SEQUENCE [MRNA]</scope>
</reference>
<organism>
    <name type="scientific">Pan troglodytes</name>
    <name type="common">Chimpanzee</name>
    <dbReference type="NCBI Taxonomy" id="9598"/>
    <lineage>
        <taxon>Eukaryota</taxon>
        <taxon>Metazoa</taxon>
        <taxon>Chordata</taxon>
        <taxon>Craniata</taxon>
        <taxon>Vertebrata</taxon>
        <taxon>Euteleostomi</taxon>
        <taxon>Mammalia</taxon>
        <taxon>Eutheria</taxon>
        <taxon>Euarchontoglires</taxon>
        <taxon>Primates</taxon>
        <taxon>Haplorrhini</taxon>
        <taxon>Catarrhini</taxon>
        <taxon>Hominidae</taxon>
        <taxon>Pan</taxon>
    </lineage>
</organism>
<proteinExistence type="evidence at transcript level"/>
<dbReference type="EMBL" id="DQ885714">
    <property type="protein sequence ID" value="ABH12223.1"/>
    <property type="molecule type" value="mRNA"/>
</dbReference>
<dbReference type="RefSeq" id="NP_001153846.1">
    <property type="nucleotide sequence ID" value="NM_001160374.1"/>
</dbReference>
<dbReference type="SMR" id="Q0MQC0"/>
<dbReference type="FunCoup" id="Q0MQC0">
    <property type="interactions" value="834"/>
</dbReference>
<dbReference type="STRING" id="9598.ENSPTRP00000061698"/>
<dbReference type="PaxDb" id="9598-ENSPTRP00000054899"/>
<dbReference type="Ensembl" id="ENSPTRT00000062343.4">
    <property type="protein sequence ID" value="ENSPTRP00000054899.4"/>
    <property type="gene ID" value="ENSPTRG00000029161.5"/>
</dbReference>
<dbReference type="GeneID" id="739803"/>
<dbReference type="KEGG" id="ptr:739803"/>
<dbReference type="CTD" id="126328"/>
<dbReference type="eggNOG" id="ENOG502S6F6">
    <property type="taxonomic scope" value="Eukaryota"/>
</dbReference>
<dbReference type="GeneTree" id="ENSGT00390000012434"/>
<dbReference type="InParanoid" id="Q0MQC0"/>
<dbReference type="OMA" id="SIEQGWE"/>
<dbReference type="Proteomes" id="UP000002277">
    <property type="component" value="Chromosome 19"/>
</dbReference>
<dbReference type="Bgee" id="ENSPTRG00000029161">
    <property type="expression patterns" value="Expressed in superior frontal gyrus and 21 other cell types or tissues"/>
</dbReference>
<dbReference type="GO" id="GO:0005743">
    <property type="term" value="C:mitochondrial inner membrane"/>
    <property type="evidence" value="ECO:0007669"/>
    <property type="project" value="UniProtKB-SubCell"/>
</dbReference>
<dbReference type="GO" id="GO:0045271">
    <property type="term" value="C:respiratory chain complex I"/>
    <property type="evidence" value="ECO:0000250"/>
    <property type="project" value="UniProtKB"/>
</dbReference>
<dbReference type="GO" id="GO:0006120">
    <property type="term" value="P:mitochondrial electron transport, NADH to ubiquinone"/>
    <property type="evidence" value="ECO:0007669"/>
    <property type="project" value="InterPro"/>
</dbReference>
<dbReference type="InterPro" id="IPR039205">
    <property type="entry name" value="NDUFA11"/>
</dbReference>
<dbReference type="PANTHER" id="PTHR21382:SF1">
    <property type="entry name" value="NADH DEHYDROGENASE [UBIQUINONE] 1 ALPHA SUBCOMPLEX SUBUNIT 11"/>
    <property type="match status" value="1"/>
</dbReference>
<dbReference type="PANTHER" id="PTHR21382">
    <property type="entry name" value="NADH-UBIQUINONE OXIDOREDUCTASE SUBUNIT"/>
    <property type="match status" value="1"/>
</dbReference>
<evidence type="ECO:0000250" key="1">
    <source>
        <dbReference type="UniProtKB" id="Q86Y39"/>
    </source>
</evidence>
<evidence type="ECO:0000250" key="2">
    <source>
        <dbReference type="UniProtKB" id="Q8HXG6"/>
    </source>
</evidence>
<evidence type="ECO:0000255" key="3"/>
<evidence type="ECO:0000305" key="4"/>
<keyword id="KW-0007">Acetylation</keyword>
<keyword id="KW-0249">Electron transport</keyword>
<keyword id="KW-0472">Membrane</keyword>
<keyword id="KW-0496">Mitochondrion</keyword>
<keyword id="KW-0999">Mitochondrion inner membrane</keyword>
<keyword id="KW-1185">Reference proteome</keyword>
<keyword id="KW-0679">Respiratory chain</keyword>
<keyword id="KW-0812">Transmembrane</keyword>
<keyword id="KW-1133">Transmembrane helix</keyword>
<keyword id="KW-0813">Transport</keyword>
<sequence>MAPKVFRQYWDIPDGTDCHRKAYSTTSIASVAGLTAAAYRVTLNPPGTFLEGVAKVGQYTFTAAAVGAVFGLTTCISAHVREKPDDPLNYFLGGCAGGLTLGARTHNYGIGAAACVYFGIAASLVKMGRLEGWEVFAKPKV</sequence>
<feature type="initiator methionine" description="Removed" evidence="2">
    <location>
        <position position="1"/>
    </location>
</feature>
<feature type="chain" id="PRO_0000251815" description="NADH dehydrogenase [ubiquinone] 1 alpha subcomplex subunit 11">
    <location>
        <begin position="2"/>
        <end position="141"/>
    </location>
</feature>
<feature type="transmembrane region" description="Helical" evidence="3">
    <location>
        <begin position="21"/>
        <end position="43"/>
    </location>
</feature>
<feature type="transmembrane region" description="Helical" evidence="3">
    <location>
        <begin position="58"/>
        <end position="80"/>
    </location>
</feature>
<feature type="modified residue" description="N-acetylalanine" evidence="2">
    <location>
        <position position="2"/>
    </location>
</feature>
<name>NDUAB_PANTR</name>
<comment type="function">
    <text evidence="1">Accessory subunit of the mitochondrial membrane respiratory chain NADH dehydrogenase (Complex I), that is believed not to be involved in catalysis. Complex I functions in the transfer of electrons from NADH to the respiratory chain. The immediate electron acceptor for the enzyme is believed to be ubiquinone.</text>
</comment>
<comment type="subunit">
    <text evidence="1">Complex I is composed of 45 different subunits.</text>
</comment>
<comment type="subcellular location">
    <subcellularLocation>
        <location evidence="1">Mitochondrion inner membrane</location>
        <topology evidence="3">Multi-pass membrane protein</topology>
        <orientation evidence="1">Matrix side</orientation>
    </subcellularLocation>
</comment>
<comment type="similarity">
    <text evidence="4">Belongs to the complex I NDUFA11 subunit family.</text>
</comment>
<accession>Q0MQC0</accession>